<proteinExistence type="evidence at protein level"/>
<dbReference type="EMBL" id="AF143487">
    <property type="protein sequence ID" value="AAD33906.1"/>
    <property type="molecule type" value="Genomic_DNA"/>
</dbReference>
<dbReference type="EMBL" id="AM055943">
    <property type="protein sequence ID" value="CAJ20543.1"/>
    <property type="molecule type" value="Genomic_DNA"/>
</dbReference>
<dbReference type="PDB" id="2LL3">
    <property type="method" value="NMR"/>
    <property type="chains" value="A=410-491"/>
</dbReference>
<dbReference type="PDB" id="2LL4">
    <property type="method" value="NMR"/>
    <property type="chains" value="M=410-491"/>
</dbReference>
<dbReference type="PDB" id="4A5V">
    <property type="method" value="NMR"/>
    <property type="chains" value="A=58-218"/>
</dbReference>
<dbReference type="PDBsum" id="2LL3"/>
<dbReference type="PDBsum" id="2LL4"/>
<dbReference type="PDBsum" id="4A5V"/>
<dbReference type="BMRB" id="Q9XZH7"/>
<dbReference type="SMR" id="Q9XZH7"/>
<dbReference type="TCDB" id="9.B.87.3.1">
    <property type="family name" value="the selenoprotein p receptor (selp-receptor) family"/>
</dbReference>
<dbReference type="UniLectin" id="Q9XZH7"/>
<dbReference type="EnsemblProtists" id="TGME49_208030-t26_1">
    <property type="protein sequence ID" value="TGME49_208030-t26_1-p1-CDS1"/>
    <property type="gene ID" value="TGME49_208030"/>
</dbReference>
<dbReference type="VEuPathDB" id="ToxoDB:TGARI_208030"/>
<dbReference type="VEuPathDB" id="ToxoDB:TGCAST_208030"/>
<dbReference type="VEuPathDB" id="ToxoDB:TGCOUG_208030"/>
<dbReference type="VEuPathDB" id="ToxoDB:TGDOM2_208030"/>
<dbReference type="VEuPathDB" id="ToxoDB:TGFOU_208030"/>
<dbReference type="VEuPathDB" id="ToxoDB:TGGT1_208030"/>
<dbReference type="VEuPathDB" id="ToxoDB:TGMAS_208030"/>
<dbReference type="VEuPathDB" id="ToxoDB:TGME49_208030"/>
<dbReference type="VEuPathDB" id="ToxoDB:TGP89_208030"/>
<dbReference type="VEuPathDB" id="ToxoDB:TGPRC2_208030"/>
<dbReference type="VEuPathDB" id="ToxoDB:TGRH88_022630"/>
<dbReference type="VEuPathDB" id="ToxoDB:TGRUB_208030"/>
<dbReference type="VEuPathDB" id="ToxoDB:TGVAND_208030"/>
<dbReference type="VEuPathDB" id="ToxoDB:TGVEG_208030"/>
<dbReference type="InParanoid" id="Q9XZH7"/>
<dbReference type="OMA" id="PYTFCDD"/>
<dbReference type="EvolutionaryTrace" id="Q9XZH7"/>
<dbReference type="GO" id="GO:0031410">
    <property type="term" value="C:cytoplasmic vesicle"/>
    <property type="evidence" value="ECO:0007669"/>
    <property type="project" value="UniProtKB-KW"/>
</dbReference>
<dbReference type="GO" id="GO:0005576">
    <property type="term" value="C:extracellular region"/>
    <property type="evidence" value="ECO:0000314"/>
    <property type="project" value="UniProtKB"/>
</dbReference>
<dbReference type="GO" id="GO:0044174">
    <property type="term" value="C:host cell endosome"/>
    <property type="evidence" value="ECO:0000314"/>
    <property type="project" value="UniProtKB"/>
</dbReference>
<dbReference type="GO" id="GO:0020009">
    <property type="term" value="C:microneme"/>
    <property type="evidence" value="ECO:0000314"/>
    <property type="project" value="UniProtKB"/>
</dbReference>
<dbReference type="GO" id="GO:0030246">
    <property type="term" value="F:carbohydrate binding"/>
    <property type="evidence" value="ECO:0000314"/>
    <property type="project" value="UniProtKB"/>
</dbReference>
<dbReference type="GO" id="GO:0005534">
    <property type="term" value="F:galactose binding"/>
    <property type="evidence" value="ECO:0000314"/>
    <property type="project" value="UniProtKB"/>
</dbReference>
<dbReference type="GO" id="GO:0046812">
    <property type="term" value="F:host cell surface binding"/>
    <property type="evidence" value="ECO:0000314"/>
    <property type="project" value="UniProtKB"/>
</dbReference>
<dbReference type="GO" id="GO:0035663">
    <property type="term" value="F:Toll-like receptor 2 binding"/>
    <property type="evidence" value="ECO:0000353"/>
    <property type="project" value="UniProtKB"/>
</dbReference>
<dbReference type="GO" id="GO:0035662">
    <property type="term" value="F:Toll-like receptor 4 binding"/>
    <property type="evidence" value="ECO:0000353"/>
    <property type="project" value="UniProtKB"/>
</dbReference>
<dbReference type="GO" id="GO:0007155">
    <property type="term" value="P:cell adhesion"/>
    <property type="evidence" value="ECO:0007669"/>
    <property type="project" value="UniProtKB-KW"/>
</dbReference>
<dbReference type="GO" id="GO:0140404">
    <property type="term" value="P:effector-mediated perturbation of host innate immune response by symbiont"/>
    <property type="evidence" value="ECO:0000315"/>
    <property type="project" value="UniProtKB"/>
</dbReference>
<dbReference type="GO" id="GO:0140403">
    <property type="term" value="P:effector-mediated suppression of host innate immune response"/>
    <property type="evidence" value="ECO:0000314"/>
    <property type="project" value="UniProtKB"/>
</dbReference>
<dbReference type="GO" id="GO:0002376">
    <property type="term" value="P:immune system process"/>
    <property type="evidence" value="ECO:0007669"/>
    <property type="project" value="UniProtKB-KW"/>
</dbReference>
<dbReference type="GO" id="GO:0006508">
    <property type="term" value="P:proteolysis"/>
    <property type="evidence" value="ECO:0007669"/>
    <property type="project" value="InterPro"/>
</dbReference>
<dbReference type="GO" id="GO:0075109">
    <property type="term" value="P:symbiont-mediated perturbation of host receptor-mediated signal transduction"/>
    <property type="evidence" value="ECO:0000315"/>
    <property type="project" value="UniProtKB"/>
</dbReference>
<dbReference type="CDD" id="cd01100">
    <property type="entry name" value="APPLE_Factor_XI_like"/>
    <property type="match status" value="6"/>
</dbReference>
<dbReference type="Gene3D" id="3.50.4.10">
    <property type="entry name" value="Hepatocyte Growth Factor"/>
    <property type="match status" value="6"/>
</dbReference>
<dbReference type="InterPro" id="IPR000177">
    <property type="entry name" value="Apple"/>
</dbReference>
<dbReference type="InterPro" id="IPR003609">
    <property type="entry name" value="Pan_app"/>
</dbReference>
<dbReference type="Pfam" id="PF00024">
    <property type="entry name" value="PAN_1"/>
    <property type="match status" value="4"/>
</dbReference>
<dbReference type="Pfam" id="PF14295">
    <property type="entry name" value="PAN_4"/>
    <property type="match status" value="2"/>
</dbReference>
<dbReference type="SMART" id="SM00223">
    <property type="entry name" value="APPLE"/>
    <property type="match status" value="6"/>
</dbReference>
<dbReference type="SMART" id="SM00473">
    <property type="entry name" value="PAN_AP"/>
    <property type="match status" value="4"/>
</dbReference>
<dbReference type="SUPFAM" id="SSF57414">
    <property type="entry name" value="Hairpin loop containing domain-like"/>
    <property type="match status" value="2"/>
</dbReference>
<dbReference type="PROSITE" id="PS50948">
    <property type="entry name" value="PAN"/>
    <property type="match status" value="5"/>
</dbReference>
<accession>Q9XZH7</accession>
<name>MIC4_TOXGO</name>
<gene>
    <name evidence="13" type="primary">MIC4</name>
    <name type="ORF">TgIb.0680</name>
</gene>
<evidence type="ECO:0000255" key="1"/>
<evidence type="ECO:0000255" key="2">
    <source>
        <dbReference type="PROSITE-ProRule" id="PRU00315"/>
    </source>
</evidence>
<evidence type="ECO:0000269" key="3">
    <source>
    </source>
</evidence>
<evidence type="ECO:0000269" key="4">
    <source>
    </source>
</evidence>
<evidence type="ECO:0000269" key="5">
    <source>
    </source>
</evidence>
<evidence type="ECO:0000269" key="6">
    <source>
    </source>
</evidence>
<evidence type="ECO:0000269" key="7">
    <source>
    </source>
</evidence>
<evidence type="ECO:0000269" key="8">
    <source>
    </source>
</evidence>
<evidence type="ECO:0000269" key="9">
    <source>
    </source>
</evidence>
<evidence type="ECO:0000303" key="10">
    <source>
    </source>
</evidence>
<evidence type="ECO:0000303" key="11">
    <source>
    </source>
</evidence>
<evidence type="ECO:0000305" key="12"/>
<evidence type="ECO:0000312" key="13">
    <source>
        <dbReference type="EMBL" id="AAD33906.1"/>
    </source>
</evidence>
<evidence type="ECO:0000312" key="14">
    <source>
        <dbReference type="EMBL" id="CAJ20543.1"/>
    </source>
</evidence>
<evidence type="ECO:0007744" key="15">
    <source>
        <dbReference type="PDB" id="2LL3"/>
    </source>
</evidence>
<evidence type="ECO:0007744" key="16">
    <source>
        <dbReference type="PDB" id="2LL4"/>
    </source>
</evidence>
<evidence type="ECO:0007744" key="17">
    <source>
        <dbReference type="PDB" id="4A5V"/>
    </source>
</evidence>
<evidence type="ECO:0007829" key="18">
    <source>
        <dbReference type="PDB" id="2LL3"/>
    </source>
</evidence>
<evidence type="ECO:0007829" key="19">
    <source>
        <dbReference type="PDB" id="4A5V"/>
    </source>
</evidence>
<feature type="signal peptide" evidence="1">
    <location>
        <begin position="1"/>
        <end position="25"/>
    </location>
</feature>
<feature type="chain" id="PRO_0000289154" description="Micronemal protein 4" evidence="1">
    <location>
        <begin position="26"/>
        <end position="580"/>
    </location>
</feature>
<feature type="domain" description="Apple 1" evidence="2">
    <location>
        <begin position="68"/>
        <end position="137"/>
    </location>
</feature>
<feature type="domain" description="Apple 2" evidence="2">
    <location>
        <begin position="141"/>
        <end position="214"/>
    </location>
</feature>
<feature type="domain" description="Apple 3" evidence="2">
    <location>
        <begin position="232"/>
        <end position="301"/>
    </location>
</feature>
<feature type="domain" description="Apple 4" evidence="2">
    <location>
        <begin position="305"/>
        <end position="375"/>
    </location>
</feature>
<feature type="domain" description="Apple 5" evidence="2">
    <location>
        <begin position="419"/>
        <end position="488"/>
    </location>
</feature>
<feature type="domain" description="Apple 6" evidence="2">
    <location>
        <begin position="492"/>
        <end position="565"/>
    </location>
</feature>
<feature type="disulfide bond" evidence="6 17">
    <location>
        <begin position="68"/>
        <end position="137"/>
    </location>
</feature>
<feature type="disulfide bond" evidence="6 17">
    <location>
        <begin position="93"/>
        <end position="115"/>
    </location>
</feature>
<feature type="disulfide bond" evidence="6 17">
    <location>
        <begin position="97"/>
        <end position="103"/>
    </location>
</feature>
<feature type="disulfide bond" evidence="6 17">
    <location>
        <begin position="141"/>
        <end position="214"/>
    </location>
</feature>
<feature type="disulfide bond" evidence="6 17">
    <location>
        <begin position="166"/>
        <end position="188"/>
    </location>
</feature>
<feature type="disulfide bond" evidence="6 17">
    <location>
        <begin position="170"/>
        <end position="176"/>
    </location>
</feature>
<feature type="disulfide bond" evidence="2">
    <location>
        <begin position="232"/>
        <end position="301"/>
    </location>
</feature>
<feature type="disulfide bond" evidence="2">
    <location>
        <begin position="257"/>
        <end position="279"/>
    </location>
</feature>
<feature type="disulfide bond" evidence="2">
    <location>
        <begin position="261"/>
        <end position="267"/>
    </location>
</feature>
<feature type="disulfide bond" evidence="2">
    <location>
        <begin position="305"/>
        <end position="380"/>
    </location>
</feature>
<feature type="disulfide bond" evidence="2">
    <location>
        <begin position="332"/>
        <end position="354"/>
    </location>
</feature>
<feature type="disulfide bond" evidence="2">
    <location>
        <begin position="336"/>
        <end position="342"/>
    </location>
</feature>
<feature type="disulfide bond" evidence="6 15 16">
    <location>
        <begin position="419"/>
        <end position="488"/>
    </location>
</feature>
<feature type="disulfide bond" evidence="6 15 16">
    <location>
        <begin position="444"/>
        <end position="466"/>
    </location>
</feature>
<feature type="disulfide bond" evidence="6 15 16">
    <location>
        <begin position="448"/>
        <end position="454"/>
    </location>
</feature>
<feature type="mutagenesis site" description="Reduces binding to asialofetuin, a host glycoprotein, and ability to activate host bone marrow-derived macrophages and dendritic cells." evidence="7">
    <original>K</original>
    <variation>M</variation>
    <location>
        <position position="469"/>
    </location>
</feature>
<feature type="strand" evidence="19">
    <location>
        <begin position="72"/>
        <end position="76"/>
    </location>
</feature>
<feature type="helix" evidence="19">
    <location>
        <begin position="90"/>
        <end position="99"/>
    </location>
</feature>
<feature type="strand" evidence="19">
    <location>
        <begin position="104"/>
        <end position="109"/>
    </location>
</feature>
<feature type="turn" evidence="19">
    <location>
        <begin position="110"/>
        <end position="112"/>
    </location>
</feature>
<feature type="strand" evidence="19">
    <location>
        <begin position="115"/>
        <end position="118"/>
    </location>
</feature>
<feature type="strand" evidence="19">
    <location>
        <begin position="124"/>
        <end position="126"/>
    </location>
</feature>
<feature type="strand" evidence="19">
    <location>
        <begin position="130"/>
        <end position="135"/>
    </location>
</feature>
<feature type="strand" evidence="19">
    <location>
        <begin position="143"/>
        <end position="148"/>
    </location>
</feature>
<feature type="strand" evidence="19">
    <location>
        <begin position="153"/>
        <end position="155"/>
    </location>
</feature>
<feature type="helix" evidence="19">
    <location>
        <begin position="163"/>
        <end position="172"/>
    </location>
</feature>
<feature type="strand" evidence="19">
    <location>
        <begin position="178"/>
        <end position="182"/>
    </location>
</feature>
<feature type="turn" evidence="19">
    <location>
        <begin position="183"/>
        <end position="186"/>
    </location>
</feature>
<feature type="strand" evidence="19">
    <location>
        <begin position="187"/>
        <end position="191"/>
    </location>
</feature>
<feature type="turn" evidence="19">
    <location>
        <begin position="193"/>
        <end position="198"/>
    </location>
</feature>
<feature type="strand" evidence="19">
    <location>
        <begin position="199"/>
        <end position="202"/>
    </location>
</feature>
<feature type="strand" evidence="19">
    <location>
        <begin position="206"/>
        <end position="212"/>
    </location>
</feature>
<feature type="turn" evidence="19">
    <location>
        <begin position="214"/>
        <end position="217"/>
    </location>
</feature>
<feature type="strand" evidence="18">
    <location>
        <begin position="425"/>
        <end position="427"/>
    </location>
</feature>
<feature type="strand" evidence="18">
    <location>
        <begin position="431"/>
        <end position="434"/>
    </location>
</feature>
<feature type="helix" evidence="18">
    <location>
        <begin position="441"/>
        <end position="450"/>
    </location>
</feature>
<feature type="strand" evidence="18">
    <location>
        <begin position="454"/>
        <end position="460"/>
    </location>
</feature>
<feature type="turn" evidence="18">
    <location>
        <begin position="461"/>
        <end position="464"/>
    </location>
</feature>
<feature type="strand" evidence="18">
    <location>
        <begin position="465"/>
        <end position="472"/>
    </location>
</feature>
<feature type="strand" evidence="18">
    <location>
        <begin position="475"/>
        <end position="477"/>
    </location>
</feature>
<feature type="strand" evidence="18">
    <location>
        <begin position="481"/>
        <end position="484"/>
    </location>
</feature>
<organism>
    <name type="scientific">Toxoplasma gondii</name>
    <dbReference type="NCBI Taxonomy" id="5811"/>
    <lineage>
        <taxon>Eukaryota</taxon>
        <taxon>Sar</taxon>
        <taxon>Alveolata</taxon>
        <taxon>Apicomplexa</taxon>
        <taxon>Conoidasida</taxon>
        <taxon>Coccidia</taxon>
        <taxon>Eucoccidiorida</taxon>
        <taxon>Eimeriorina</taxon>
        <taxon>Sarcocystidae</taxon>
        <taxon>Toxoplasma</taxon>
    </lineage>
</organism>
<comment type="function">
    <text evidence="3 5 6 7 8 9">Soluble adhesin with carbohydrate-binding activity (PubMed:11053441, PubMed:22399295, PubMed:31226171). Binds to galactose-terminating oligosaccharides (PubMed:22399295, PubMed:31226171). Required for attachment of the parasite to the host cell prior to invasion (PubMed:11053441, PubMed:11447133). Triggers the activation of murine bone marrow-derived dendritic cells and macrophages and production of pro-inflammatory cytokines, such as IL12 (IL12B/IL12A), in host TLR2/TLR4-dependent manner (PubMed:31226171, PubMed:31658592). Triggers the production of anti-inflammatory cytokine IL10 in murine bone marrow-derived macrophages in host TLR4-dependent manner (PubMed:33912181). Induces transient endotoxin tolerance in murine bone marrow-derived macrophages, manifested by reduced TNF-alpha (TNF) production in response to challenge with lipopolysaccharides (LPS) (PubMed:33912181).</text>
</comment>
<comment type="activity regulation">
    <text evidence="7">Lacto-N-biose inhibits binding to asialofetuin, a host glycoprotein.</text>
</comment>
<comment type="subunit">
    <text evidence="4 5 6 7">Monomer (PubMed:11447133). Part of the MIC6-MIC1-MIC4 complex (PubMed:11157983). Interacts (via the second apple domain) directly with MIC1 (via the beta-finger region) (PubMed:11447133, PubMed:22399295). Interacts with murine TLR2; the interaction promotes activation of bone marrow-derived dendritic cells and macrophages in the host (PubMed:31226171). Interacts with murine TLR4; the interaction promotes activation of bone marrow-derived dendritic cells and macrophages in the host (PubMed:31226171).</text>
</comment>
<comment type="subcellular location">
    <subcellularLocation>
        <location evidence="3 4">Cytoplasmic vesicle</location>
        <location evidence="3 4">Secretory vesicle</location>
        <location evidence="3 4">Microneme</location>
    </subcellularLocation>
    <subcellularLocation>
        <location evidence="9">Host early endosome</location>
    </subcellularLocation>
    <text evidence="9">Localizes to host early endosomes after interacting with host TLR4.</text>
</comment>
<comment type="developmental stage">
    <text evidence="3">Not detected in unsporulated or partially sporulated oocysts, but present at approximately equal levels in fully sporulated oocysts (sporozoites), bradyzoites, and tachyzoites.</text>
</comment>
<comment type="domain">
    <text evidence="4">The first and second apple domains are sufficient for targeting the protein to the micronemes.</text>
</comment>
<comment type="domain">
    <text evidence="3">C-terminus encompassing the sixth apple domain is responsible for host cell binding.</text>
</comment>
<comment type="domain">
    <text evidence="6">The fifth apple domain is a lectin with specificity for galactose-terminating oligosaccharides.</text>
</comment>
<comment type="PTM">
    <text evidence="3 4">Proteolytically cleaved at the N- and C-terminus after release from the microneme.</text>
</comment>
<comment type="disruption phenotype">
    <text evidence="7">Reduced production of IL12 in host cells during infection.</text>
</comment>
<reference evidence="13" key="1">
    <citation type="journal article" date="2001" name="J. Biol. Chem.">
        <title>The toxoplasma micronemal protein MIC4 is an adhesin composed of six conserved apple domains.</title>
        <authorList>
            <person name="Brecht S."/>
            <person name="Carruthers V.B."/>
            <person name="Ferguson D.J.P."/>
            <person name="Giddings O.K."/>
            <person name="Wang G."/>
            <person name="Jakle U."/>
            <person name="Harper J.M."/>
            <person name="Sibley L.D."/>
            <person name="Soldati D."/>
        </authorList>
    </citation>
    <scope>NUCLEOTIDE SEQUENCE [GENOMIC DNA]</scope>
    <scope>FUNCTION</scope>
    <scope>SUBCELLULAR LOCATION</scope>
    <scope>DEVELOPMENTAL STAGE</scope>
    <scope>DOMAIN</scope>
    <scope>PROTEOLYTIC CLEAVAGE</scope>
    <source>
        <strain evidence="13">RH</strain>
    </source>
</reference>
<reference evidence="14" key="2">
    <citation type="journal article" date="2006" name="Genome Res.">
        <title>Common inheritance of chromosome Ia associated with clonal expansion of Toxoplasma gondii.</title>
        <authorList>
            <person name="Khan A."/>
            <person name="Bohme U."/>
            <person name="Kelly K.A."/>
            <person name="Adlem E."/>
            <person name="Brooks K."/>
            <person name="Simmonds M."/>
            <person name="Mungall K."/>
            <person name="Quail M.A."/>
            <person name="Arrowsmith C."/>
            <person name="Chillingworth T."/>
            <person name="Churcher C."/>
            <person name="Harris D."/>
            <person name="Collins M."/>
            <person name="Fosker N."/>
            <person name="Fraser A."/>
            <person name="Hance Z."/>
            <person name="Jagels K."/>
            <person name="Moule S."/>
            <person name="Murphy L."/>
            <person name="O'Neil S."/>
            <person name="Rajandream M.-A."/>
            <person name="Saunders D."/>
            <person name="Seeger K."/>
            <person name="Whitehead S."/>
            <person name="Mayr T."/>
            <person name="Xuan X."/>
            <person name="Watanabe J."/>
            <person name="Suzuki Y."/>
            <person name="Wakaguri H."/>
            <person name="Sugano S."/>
            <person name="Sugimoto C."/>
            <person name="Paulsen I."/>
            <person name="Mackey A.J."/>
            <person name="Roos D.S."/>
            <person name="Hall N."/>
            <person name="Berriman M."/>
            <person name="Barrell B."/>
            <person name="Sibley L.D."/>
            <person name="Ajioka J.W."/>
        </authorList>
    </citation>
    <scope>NUCLEOTIDE SEQUENCE [GENOMIC DNA]</scope>
    <source>
        <strain evidence="14">RH</strain>
    </source>
</reference>
<reference evidence="12" key="3">
    <citation type="journal article" date="2001" name="Glycobiology">
        <title>Toxoplasma gondii micronemal protein MIC1 is a lactose-binding lectin.</title>
        <authorList>
            <person name="Lourenco E.V."/>
            <person name="Pereira S.R."/>
            <person name="Faca V.M."/>
            <person name="Coelho-Castelo A.A."/>
            <person name="Mineo J.R."/>
            <person name="Roque-Barreira M.-C."/>
            <person name="Greene L.J."/>
            <person name="Panunto-Castelo A."/>
        </authorList>
    </citation>
    <scope>PROTEIN SEQUENCE OF 45-54</scope>
    <scope>FUNCTION</scope>
    <scope>SUBUNIT</scope>
    <scope>INTERACTION WITH MIC1</scope>
</reference>
<reference evidence="12" key="4">
    <citation type="journal article" date="2001" name="J. Cell Biol.">
        <title>Identification and characterization of an escorter for two secretory adhesins in Toxoplasma gondii.</title>
        <authorList>
            <person name="Reiss M."/>
            <person name="Viebig N."/>
            <person name="Brecht S."/>
            <person name="Fourmaux M.-N."/>
            <person name="Soete M."/>
            <person name="Di Cristina M."/>
            <person name="Dubremetz J.F."/>
            <person name="Soldati D."/>
        </authorList>
    </citation>
    <scope>IDENTIFICATION IN THE MIC6-MIC1-MIC4 COMPLEX</scope>
    <scope>SUBCELLULAR LOCATION</scope>
    <scope>DOMAIN</scope>
    <scope>PROTEOLYTIC CLEAVAGE</scope>
    <source>
        <strain evidence="10">RH</strain>
    </source>
</reference>
<reference key="5">
    <citation type="journal article" date="2019" name="Int. J. Mol. Sci.">
        <title>Receptor Heterodimerization and Co-Receptor Engagement in TLR2 Activation Induced by MIC1 and MIC4 from Toxoplasma gondii.</title>
        <authorList>
            <person name="Costa Mendonca-Natividade F."/>
            <person name="Duque Lopes C."/>
            <person name="Ricci-Azevedo R."/>
            <person name="Sardinha-Silva A."/>
            <person name="Figueiredo Pinzan C."/>
            <person name="Paiva Alegre-Maller A.C."/>
            <person name="Nohara L.L."/>
            <person name="Carneiro A.B."/>
            <person name="Panunto-Castelo A."/>
            <person name="Almeida I.C."/>
            <person name="Roque-Barreira M.C."/>
        </authorList>
    </citation>
    <scope>FUNCTION</scope>
</reference>
<reference key="6">
    <citation type="journal article" date="2019" name="PLoS Pathog.">
        <title>The lectin-specific activity of Toxoplasma gondii microneme proteins 1 and 4 binds Toll-like receptor 2 and 4 N-glycans to regulate innate immune priming.</title>
        <authorList>
            <person name="Sardinha-Silva A."/>
            <person name="Mendonca-Natividade F.C."/>
            <person name="Pinzan C.F."/>
            <person name="Lopes C.D."/>
            <person name="Costa D.L."/>
            <person name="Jacot D."/>
            <person name="Fernandes F.F."/>
            <person name="Zorzetto-Fernandes A.L.V."/>
            <person name="Gay N.J."/>
            <person name="Sher A."/>
            <person name="Jankovic D."/>
            <person name="Soldati-Favre D."/>
            <person name="Grigg M.E."/>
            <person name="Roque-Barreira M.C."/>
        </authorList>
    </citation>
    <scope>FUNCTION</scope>
    <scope>ACTIVITY REGULATION</scope>
    <scope>INTERACTION WITH HOST TLR2 AND TLR4</scope>
    <scope>DISRUPTION PHENOTYPE</scope>
    <scope>MUTAGENESIS OF LYS-469</scope>
</reference>
<reference key="7">
    <citation type="journal article" date="2021" name="Front. Immunol.">
        <title>Microneme Proteins 1 and 4 From Toxoplasma gondii Induce IL-10 Production by Macrophages Through TLR4 Endocytosis.</title>
        <authorList>
            <person name="Ricci-Azevedo R."/>
            <person name="Mendonca-Natividade F.C."/>
            <person name="Santana A.C."/>
            <person name="Alcoforado Diniz J."/>
            <person name="Roque-Barreira M.C."/>
        </authorList>
    </citation>
    <scope>FUNCTION</scope>
    <scope>SUBCELLULAR LOCATION</scope>
</reference>
<reference evidence="15 16 17" key="8">
    <citation type="journal article" date="2012" name="J. Biol. Chem.">
        <title>Galactose recognition by the apicomplexan parasite Toxoplasma gondii.</title>
        <authorList>
            <person name="Marchant J."/>
            <person name="Cowper B."/>
            <person name="Liu Y."/>
            <person name="Lai L."/>
            <person name="Pinzan C."/>
            <person name="Marq J.B."/>
            <person name="Friedrich N."/>
            <person name="Sawmynaden K."/>
            <person name="Liew L."/>
            <person name="Chai W."/>
            <person name="Childs R.A."/>
            <person name="Saouros S."/>
            <person name="Simpson P."/>
            <person name="Roque Barreira M.C."/>
            <person name="Feizi T."/>
            <person name="Soldati-Favre D."/>
            <person name="Matthews S."/>
        </authorList>
    </citation>
    <scope>STRUCTURE BY NMR OF 58-218 AND 410-491 IN COMPLEX WITH LACTO-N-BIOSE</scope>
    <scope>FUNCTION</scope>
    <scope>INTERACTION WITH MIC1</scope>
    <scope>DOMAIN</scope>
    <scope>DISULFIDE BONDS</scope>
</reference>
<protein>
    <recommendedName>
        <fullName>Micronemal protein 4</fullName>
        <shortName evidence="11">TgMIC4</shortName>
    </recommendedName>
</protein>
<sequence>MRASLPVHLVVCTQLSAVWFGVAKAHGGHRLEPHVPGFLQGFTDITPAGDDVSANVTSSEPAKLDLSCVHSDNKGSRAPTIGEPVPDVSLEQCAAQCKAVDGCTHFTYNDDSKMCHVKEGKPDLYDLTGGKTASRSCDRSCFEQHVSYEGAPDVMTAMVTSQSADCQAACAADPSCEIFTYNEHDQKCTFKGRGFSAFKERGVLGVTSGPKQFCDEGGKLTQEEMEDQISGCIQLSDVGSMTADLEEPMEADSVGACMERCRCDGRCTHFTFNDNTRMCYLKGDKMQLYSSPGDRTGPKSCDSSCFSNGVSYVDDPATDVETVFEISHPIYCQVICAANPLCTVFQWYASEAKCVVKRKGFYKHRKTGVTGVTVGPREFCDFGGSIRDREEADAVGSDDGLNAEATMANSPDFHDEVECVHTGNIGSKAQTIGEVKRASSLSECRARCQAEKECSHYTYNVKSGLCYPKRGKPQFYKYLGDMTGSRTCDTSCLRRGVDYSQGPEVGKPWYSTLPTDCQVACDAEDACLVFTWDSATSRCYLIGSGFSAHRRNDVDGVVSGPYTFCDNGENLQVLEAKDTE</sequence>
<keyword id="KW-0002">3D-structure</keyword>
<keyword id="KW-0130">Cell adhesion</keyword>
<keyword id="KW-0968">Cytoplasmic vesicle</keyword>
<keyword id="KW-0903">Direct protein sequencing</keyword>
<keyword id="KW-1015">Disulfide bond</keyword>
<keyword id="KW-1039">Host endosome</keyword>
<keyword id="KW-0391">Immunity</keyword>
<keyword id="KW-0430">Lectin</keyword>
<keyword id="KW-0677">Repeat</keyword>
<keyword id="KW-0732">Signal</keyword>
<keyword id="KW-0843">Virulence</keyword>